<evidence type="ECO:0000255" key="1">
    <source>
        <dbReference type="HAMAP-Rule" id="MF_00550"/>
    </source>
</evidence>
<reference key="1">
    <citation type="journal article" date="2006" name="J. Bacteriol.">
        <title>Pathogenomic sequence analysis of Bacillus cereus and Bacillus thuringiensis isolates closely related to Bacillus anthracis.</title>
        <authorList>
            <person name="Han C.S."/>
            <person name="Xie G."/>
            <person name="Challacombe J.F."/>
            <person name="Altherr M.R."/>
            <person name="Bhotika S.S."/>
            <person name="Bruce D."/>
            <person name="Campbell C.S."/>
            <person name="Campbell M.L."/>
            <person name="Chen J."/>
            <person name="Chertkov O."/>
            <person name="Cleland C."/>
            <person name="Dimitrijevic M."/>
            <person name="Doggett N.A."/>
            <person name="Fawcett J.J."/>
            <person name="Glavina T."/>
            <person name="Goodwin L.A."/>
            <person name="Hill K.K."/>
            <person name="Hitchcock P."/>
            <person name="Jackson P.J."/>
            <person name="Keim P."/>
            <person name="Kewalramani A.R."/>
            <person name="Longmire J."/>
            <person name="Lucas S."/>
            <person name="Malfatti S."/>
            <person name="McMurry K."/>
            <person name="Meincke L.J."/>
            <person name="Misra M."/>
            <person name="Moseman B.L."/>
            <person name="Mundt M."/>
            <person name="Munk A.C."/>
            <person name="Okinaka R.T."/>
            <person name="Parson-Quintana B."/>
            <person name="Reilly L.P."/>
            <person name="Richardson P."/>
            <person name="Robinson D.L."/>
            <person name="Rubin E."/>
            <person name="Saunders E."/>
            <person name="Tapia R."/>
            <person name="Tesmer J.G."/>
            <person name="Thayer N."/>
            <person name="Thompson L.S."/>
            <person name="Tice H."/>
            <person name="Ticknor L.O."/>
            <person name="Wills P.L."/>
            <person name="Brettin T.S."/>
            <person name="Gilna P."/>
        </authorList>
    </citation>
    <scope>NUCLEOTIDE SEQUENCE [LARGE SCALE GENOMIC DNA]</scope>
    <source>
        <strain>ZK / E33L</strain>
    </source>
</reference>
<protein>
    <recommendedName>
        <fullName evidence="1">Peptidase T</fullName>
        <ecNumber evidence="1">3.4.11.4</ecNumber>
    </recommendedName>
    <alternativeName>
        <fullName evidence="1">Aminotripeptidase</fullName>
        <shortName evidence="1">Tripeptidase</shortName>
    </alternativeName>
    <alternativeName>
        <fullName evidence="1">Tripeptide aminopeptidase</fullName>
    </alternativeName>
</protein>
<name>PEPT_BACCZ</name>
<feature type="chain" id="PRO_0000185280" description="Peptidase T">
    <location>
        <begin position="1"/>
        <end position="412"/>
    </location>
</feature>
<feature type="active site" evidence="1">
    <location>
        <position position="83"/>
    </location>
</feature>
<feature type="active site" description="Proton acceptor" evidence="1">
    <location>
        <position position="178"/>
    </location>
</feature>
<feature type="binding site" evidence="1">
    <location>
        <position position="81"/>
    </location>
    <ligand>
        <name>Zn(2+)</name>
        <dbReference type="ChEBI" id="CHEBI:29105"/>
        <label>1</label>
    </ligand>
</feature>
<feature type="binding site" evidence="1">
    <location>
        <position position="144"/>
    </location>
    <ligand>
        <name>Zn(2+)</name>
        <dbReference type="ChEBI" id="CHEBI:29105"/>
        <label>1</label>
    </ligand>
</feature>
<feature type="binding site" evidence="1">
    <location>
        <position position="144"/>
    </location>
    <ligand>
        <name>Zn(2+)</name>
        <dbReference type="ChEBI" id="CHEBI:29105"/>
        <label>2</label>
    </ligand>
</feature>
<feature type="binding site" evidence="1">
    <location>
        <position position="179"/>
    </location>
    <ligand>
        <name>Zn(2+)</name>
        <dbReference type="ChEBI" id="CHEBI:29105"/>
        <label>2</label>
    </ligand>
</feature>
<feature type="binding site" evidence="1">
    <location>
        <position position="201"/>
    </location>
    <ligand>
        <name>Zn(2+)</name>
        <dbReference type="ChEBI" id="CHEBI:29105"/>
        <label>1</label>
    </ligand>
</feature>
<feature type="binding site" evidence="1">
    <location>
        <position position="383"/>
    </location>
    <ligand>
        <name>Zn(2+)</name>
        <dbReference type="ChEBI" id="CHEBI:29105"/>
        <label>2</label>
    </ligand>
</feature>
<gene>
    <name evidence="1" type="primary">pepT</name>
    <name type="ordered locus">BCE33L3500</name>
</gene>
<organism>
    <name type="scientific">Bacillus cereus (strain ZK / E33L)</name>
    <dbReference type="NCBI Taxonomy" id="288681"/>
    <lineage>
        <taxon>Bacteria</taxon>
        <taxon>Bacillati</taxon>
        <taxon>Bacillota</taxon>
        <taxon>Bacilli</taxon>
        <taxon>Bacillales</taxon>
        <taxon>Bacillaceae</taxon>
        <taxon>Bacillus</taxon>
        <taxon>Bacillus cereus group</taxon>
    </lineage>
</organism>
<sequence length="412" mass="46214">MNLKQELIERFTRYVKIDTQSNEDSHTVPTTPGQIEFGKLLVEELKEIGLTEVTMDDNGYVMATLPANTDKDVPVIGFLAHLDTATDFTGKNVKPQIHENFDGNAITLNEELNVVLTPEQFPELPSYKGHTIITTDGTTLLGADDKAGLTEIMVAMNYLIHNPQIKHGKIRVAFTPDEEIGRGPAHFDVEAFGASFAYTMDGGPLGGLEYESFNAAGAKLTFNGTNTHPGTAKNKMRNATKLAMEFNSYLPVEEAPEYTEGYEGFYHLLSLNGDVEQSKAYYIIRDFDRENFEVRKHNVENIVKQMQEKYGQDAVVLEMNDQYYNMLEKIEPVREIVDIAYEAMKSLNIEPNIHPIRGGTDGSQLSYMGLPTPNIFTGGENYHGKFEYVSVDVMEKAVQVIIEIARRFEEQA</sequence>
<accession>Q636T5</accession>
<keyword id="KW-0031">Aminopeptidase</keyword>
<keyword id="KW-0963">Cytoplasm</keyword>
<keyword id="KW-0378">Hydrolase</keyword>
<keyword id="KW-0479">Metal-binding</keyword>
<keyword id="KW-0482">Metalloprotease</keyword>
<keyword id="KW-0645">Protease</keyword>
<keyword id="KW-0862">Zinc</keyword>
<dbReference type="EC" id="3.4.11.4" evidence="1"/>
<dbReference type="EMBL" id="CP000001">
    <property type="protein sequence ID" value="AAU16766.1"/>
    <property type="molecule type" value="Genomic_DNA"/>
</dbReference>
<dbReference type="SMR" id="Q636T5"/>
<dbReference type="MEROPS" id="M20.003"/>
<dbReference type="KEGG" id="bcz:BCE33L3500"/>
<dbReference type="Proteomes" id="UP000002612">
    <property type="component" value="Chromosome"/>
</dbReference>
<dbReference type="GO" id="GO:0005829">
    <property type="term" value="C:cytosol"/>
    <property type="evidence" value="ECO:0007669"/>
    <property type="project" value="TreeGrafter"/>
</dbReference>
<dbReference type="GO" id="GO:0008237">
    <property type="term" value="F:metallopeptidase activity"/>
    <property type="evidence" value="ECO:0007669"/>
    <property type="project" value="UniProtKB-KW"/>
</dbReference>
<dbReference type="GO" id="GO:0045148">
    <property type="term" value="F:tripeptide aminopeptidase activity"/>
    <property type="evidence" value="ECO:0007669"/>
    <property type="project" value="UniProtKB-UniRule"/>
</dbReference>
<dbReference type="GO" id="GO:0008270">
    <property type="term" value="F:zinc ion binding"/>
    <property type="evidence" value="ECO:0007669"/>
    <property type="project" value="UniProtKB-UniRule"/>
</dbReference>
<dbReference type="GO" id="GO:0043171">
    <property type="term" value="P:peptide catabolic process"/>
    <property type="evidence" value="ECO:0007669"/>
    <property type="project" value="UniProtKB-UniRule"/>
</dbReference>
<dbReference type="GO" id="GO:0006508">
    <property type="term" value="P:proteolysis"/>
    <property type="evidence" value="ECO:0007669"/>
    <property type="project" value="UniProtKB-UniRule"/>
</dbReference>
<dbReference type="CDD" id="cd03892">
    <property type="entry name" value="M20_peptT"/>
    <property type="match status" value="1"/>
</dbReference>
<dbReference type="FunFam" id="3.30.70.360:FF:000002">
    <property type="entry name" value="Peptidase T"/>
    <property type="match status" value="1"/>
</dbReference>
<dbReference type="Gene3D" id="3.30.70.360">
    <property type="match status" value="1"/>
</dbReference>
<dbReference type="Gene3D" id="3.40.630.10">
    <property type="entry name" value="Zn peptidases"/>
    <property type="match status" value="1"/>
</dbReference>
<dbReference type="HAMAP" id="MF_00550">
    <property type="entry name" value="Aminopeptidase_M20"/>
    <property type="match status" value="1"/>
</dbReference>
<dbReference type="InterPro" id="IPR001261">
    <property type="entry name" value="ArgE/DapE_CS"/>
</dbReference>
<dbReference type="InterPro" id="IPR036264">
    <property type="entry name" value="Bact_exopeptidase_dim_dom"/>
</dbReference>
<dbReference type="InterPro" id="IPR002933">
    <property type="entry name" value="Peptidase_M20"/>
</dbReference>
<dbReference type="InterPro" id="IPR011650">
    <property type="entry name" value="Peptidase_M20_dimer"/>
</dbReference>
<dbReference type="InterPro" id="IPR010161">
    <property type="entry name" value="Peptidase_M20B"/>
</dbReference>
<dbReference type="NCBIfam" id="TIGR01882">
    <property type="entry name" value="peptidase-T"/>
    <property type="match status" value="1"/>
</dbReference>
<dbReference type="NCBIfam" id="NF003976">
    <property type="entry name" value="PRK05469.1"/>
    <property type="match status" value="1"/>
</dbReference>
<dbReference type="NCBIfam" id="NF009920">
    <property type="entry name" value="PRK13381.1"/>
    <property type="match status" value="1"/>
</dbReference>
<dbReference type="PANTHER" id="PTHR42994">
    <property type="entry name" value="PEPTIDASE T"/>
    <property type="match status" value="1"/>
</dbReference>
<dbReference type="PANTHER" id="PTHR42994:SF1">
    <property type="entry name" value="PEPTIDASE T"/>
    <property type="match status" value="1"/>
</dbReference>
<dbReference type="Pfam" id="PF07687">
    <property type="entry name" value="M20_dimer"/>
    <property type="match status" value="1"/>
</dbReference>
<dbReference type="Pfam" id="PF01546">
    <property type="entry name" value="Peptidase_M20"/>
    <property type="match status" value="1"/>
</dbReference>
<dbReference type="PIRSF" id="PIRSF037215">
    <property type="entry name" value="Peptidase_M20B"/>
    <property type="match status" value="1"/>
</dbReference>
<dbReference type="SUPFAM" id="SSF55031">
    <property type="entry name" value="Bacterial exopeptidase dimerisation domain"/>
    <property type="match status" value="1"/>
</dbReference>
<dbReference type="SUPFAM" id="SSF53187">
    <property type="entry name" value="Zn-dependent exopeptidases"/>
    <property type="match status" value="1"/>
</dbReference>
<dbReference type="PROSITE" id="PS00758">
    <property type="entry name" value="ARGE_DAPE_CPG2_1"/>
    <property type="match status" value="1"/>
</dbReference>
<dbReference type="PROSITE" id="PS00759">
    <property type="entry name" value="ARGE_DAPE_CPG2_2"/>
    <property type="match status" value="1"/>
</dbReference>
<proteinExistence type="inferred from homology"/>
<comment type="function">
    <text evidence="1">Cleaves the N-terminal amino acid of tripeptides.</text>
</comment>
<comment type="catalytic activity">
    <reaction evidence="1">
        <text>Release of the N-terminal residue from a tripeptide.</text>
        <dbReference type="EC" id="3.4.11.4"/>
    </reaction>
</comment>
<comment type="cofactor">
    <cofactor evidence="1">
        <name>Zn(2+)</name>
        <dbReference type="ChEBI" id="CHEBI:29105"/>
    </cofactor>
    <text evidence="1">Binds 2 Zn(2+) ions per subunit.</text>
</comment>
<comment type="subcellular location">
    <subcellularLocation>
        <location evidence="1">Cytoplasm</location>
    </subcellularLocation>
</comment>
<comment type="similarity">
    <text evidence="1">Belongs to the peptidase M20B family.</text>
</comment>